<accession>P02202</accession>
<sequence>MGLSDDEWNHVLGIWAKVEPDLTAHGQEVIIRLFQLHPETQERFAKFKNLTTIDALKSSEEVKKHGTTVLTALGRILKQKNNHEQELKPLAESHATKHKIPVKYLEFICEIIVKVIAEKHPSDFGADSQAAMKKALELFRNDMASKYKEFGFLG</sequence>
<protein>
    <recommendedName>
        <fullName>Myoglobin</fullName>
    </recommendedName>
    <alternativeName>
        <fullName evidence="1">Nitrite reductase MB</fullName>
        <ecNumber evidence="1">1.7.-.-</ecNumber>
    </alternativeName>
    <alternativeName>
        <fullName evidence="1">Pseudoperoxidase MB</fullName>
        <ecNumber evidence="1">1.11.1.-</ecNumber>
    </alternativeName>
</protein>
<comment type="function">
    <text evidence="1">Monomeric heme protein which primary function is to store oxygen and facilitate its diffusion within muscle tissues. Reversibly binds oxygen through a pentacoordinated heme iron and enables its timely and efficient release as needed during periods of heightened demand. Depending on the oxidative conditions of tissues and cells, and in addition to its ability to bind oxygen, it also has a nitrite reductase activity whereby it regulates the production of bioactive nitric oxide. Under stress conditions, like hypoxia and anoxia, it also protects cells against reactive oxygen species thanks to its pseudoperoxidase activity.</text>
</comment>
<comment type="catalytic activity">
    <reaction evidence="1">
        <text>Fe(III)-heme b-[protein] + nitric oxide + H2O = Fe(II)-heme b-[protein] + nitrite + 2 H(+)</text>
        <dbReference type="Rhea" id="RHEA:77711"/>
        <dbReference type="Rhea" id="RHEA-COMP:18975"/>
        <dbReference type="Rhea" id="RHEA-COMP:18976"/>
        <dbReference type="ChEBI" id="CHEBI:15377"/>
        <dbReference type="ChEBI" id="CHEBI:15378"/>
        <dbReference type="ChEBI" id="CHEBI:16301"/>
        <dbReference type="ChEBI" id="CHEBI:16480"/>
        <dbReference type="ChEBI" id="CHEBI:55376"/>
        <dbReference type="ChEBI" id="CHEBI:60344"/>
    </reaction>
    <physiologicalReaction direction="right-to-left" evidence="1">
        <dbReference type="Rhea" id="RHEA:77713"/>
    </physiologicalReaction>
</comment>
<comment type="catalytic activity">
    <reaction evidence="1">
        <text>H2O2 + AH2 = A + 2 H2O</text>
        <dbReference type="Rhea" id="RHEA:30275"/>
        <dbReference type="ChEBI" id="CHEBI:13193"/>
        <dbReference type="ChEBI" id="CHEBI:15377"/>
        <dbReference type="ChEBI" id="CHEBI:16240"/>
        <dbReference type="ChEBI" id="CHEBI:17499"/>
    </reaction>
</comment>
<comment type="subunit">
    <text evidence="2">Monomeric.</text>
</comment>
<comment type="subcellular location">
    <subcellularLocation>
        <location evidence="1">Cytoplasm</location>
        <location evidence="1">Sarcoplasm</location>
    </subcellularLocation>
</comment>
<comment type="similarity">
    <text evidence="5">Belongs to the globin family.</text>
</comment>
<dbReference type="EC" id="1.7.-.-" evidence="1"/>
<dbReference type="EC" id="1.11.1.-" evidence="1"/>
<dbReference type="PIR" id="A02523">
    <property type="entry name" value="MYTTG"/>
</dbReference>
<dbReference type="RefSeq" id="XP_007062733.1">
    <property type="nucleotide sequence ID" value="XM_007062671.3"/>
</dbReference>
<dbReference type="SMR" id="P02202"/>
<dbReference type="GeneID" id="102944618"/>
<dbReference type="KEGG" id="cmy:102944618"/>
<dbReference type="CTD" id="4151"/>
<dbReference type="eggNOG" id="KOG3378">
    <property type="taxonomic scope" value="Eukaryota"/>
</dbReference>
<dbReference type="OrthoDB" id="265044at2759"/>
<dbReference type="GO" id="GO:0070062">
    <property type="term" value="C:extracellular exosome"/>
    <property type="evidence" value="ECO:0007669"/>
    <property type="project" value="TreeGrafter"/>
</dbReference>
<dbReference type="GO" id="GO:0016528">
    <property type="term" value="C:sarcoplasm"/>
    <property type="evidence" value="ECO:0000250"/>
    <property type="project" value="UniProtKB"/>
</dbReference>
<dbReference type="GO" id="GO:0020037">
    <property type="term" value="F:heme binding"/>
    <property type="evidence" value="ECO:0007669"/>
    <property type="project" value="InterPro"/>
</dbReference>
<dbReference type="GO" id="GO:0046872">
    <property type="term" value="F:metal ion binding"/>
    <property type="evidence" value="ECO:0007669"/>
    <property type="project" value="UniProtKB-KW"/>
</dbReference>
<dbReference type="GO" id="GO:0098809">
    <property type="term" value="F:nitrite reductase activity"/>
    <property type="evidence" value="ECO:0000250"/>
    <property type="project" value="UniProtKB"/>
</dbReference>
<dbReference type="GO" id="GO:0019825">
    <property type="term" value="F:oxygen binding"/>
    <property type="evidence" value="ECO:0007669"/>
    <property type="project" value="InterPro"/>
</dbReference>
<dbReference type="GO" id="GO:0005344">
    <property type="term" value="F:oxygen carrier activity"/>
    <property type="evidence" value="ECO:0000250"/>
    <property type="project" value="UniProtKB"/>
</dbReference>
<dbReference type="GO" id="GO:0004601">
    <property type="term" value="F:peroxidase activity"/>
    <property type="evidence" value="ECO:0000250"/>
    <property type="project" value="UniProtKB"/>
</dbReference>
<dbReference type="GO" id="GO:0019430">
    <property type="term" value="P:removal of superoxide radicals"/>
    <property type="evidence" value="ECO:0000250"/>
    <property type="project" value="UniProtKB"/>
</dbReference>
<dbReference type="CDD" id="cd08926">
    <property type="entry name" value="Mb"/>
    <property type="match status" value="1"/>
</dbReference>
<dbReference type="Gene3D" id="6.10.140.2100">
    <property type="match status" value="1"/>
</dbReference>
<dbReference type="Gene3D" id="6.10.140.2110">
    <property type="match status" value="1"/>
</dbReference>
<dbReference type="InterPro" id="IPR000971">
    <property type="entry name" value="Globin"/>
</dbReference>
<dbReference type="InterPro" id="IPR009050">
    <property type="entry name" value="Globin-like_sf"/>
</dbReference>
<dbReference type="InterPro" id="IPR002335">
    <property type="entry name" value="Myoglobin"/>
</dbReference>
<dbReference type="PANTHER" id="PTHR47132">
    <property type="entry name" value="MYOGLOBIN"/>
    <property type="match status" value="1"/>
</dbReference>
<dbReference type="PANTHER" id="PTHR47132:SF1">
    <property type="entry name" value="MYOGLOBIN"/>
    <property type="match status" value="1"/>
</dbReference>
<dbReference type="Pfam" id="PF00042">
    <property type="entry name" value="Globin"/>
    <property type="match status" value="1"/>
</dbReference>
<dbReference type="PRINTS" id="PR00613">
    <property type="entry name" value="MYOGLOBIN"/>
</dbReference>
<dbReference type="SUPFAM" id="SSF46458">
    <property type="entry name" value="Globin-like"/>
    <property type="match status" value="1"/>
</dbReference>
<dbReference type="PROSITE" id="PS01033">
    <property type="entry name" value="GLOBIN"/>
    <property type="match status" value="1"/>
</dbReference>
<name>MYG_CHEMY</name>
<gene>
    <name type="primary">MB</name>
</gene>
<proteinExistence type="evidence at protein level"/>
<evidence type="ECO:0000250" key="1">
    <source>
        <dbReference type="UniProtKB" id="P02144"/>
    </source>
</evidence>
<evidence type="ECO:0000250" key="2">
    <source>
        <dbReference type="UniProtKB" id="P02185"/>
    </source>
</evidence>
<evidence type="ECO:0000250" key="3">
    <source>
        <dbReference type="UniProtKB" id="P02189"/>
    </source>
</evidence>
<evidence type="ECO:0000250" key="4">
    <source>
        <dbReference type="UniProtKB" id="P68082"/>
    </source>
</evidence>
<evidence type="ECO:0000255" key="5">
    <source>
        <dbReference type="PROSITE-ProRule" id="PRU00238"/>
    </source>
</evidence>
<evidence type="ECO:0000269" key="6">
    <source>
    </source>
</evidence>
<organism>
    <name type="scientific">Chelonia mydas</name>
    <name type="common">Green sea-turtle</name>
    <name type="synonym">Chelonia agassizi</name>
    <dbReference type="NCBI Taxonomy" id="8469"/>
    <lineage>
        <taxon>Eukaryota</taxon>
        <taxon>Metazoa</taxon>
        <taxon>Chordata</taxon>
        <taxon>Craniata</taxon>
        <taxon>Vertebrata</taxon>
        <taxon>Euteleostomi</taxon>
        <taxon>Archelosauria</taxon>
        <taxon>Testudinata</taxon>
        <taxon>Testudines</taxon>
        <taxon>Cryptodira</taxon>
        <taxon>Durocryptodira</taxon>
        <taxon>Americhelydia</taxon>
        <taxon>Chelonioidea</taxon>
        <taxon>Cheloniidae</taxon>
        <taxon>Chelonia</taxon>
    </lineage>
</organism>
<keyword id="KW-0963">Cytoplasm</keyword>
<keyword id="KW-0903">Direct protein sequencing</keyword>
<keyword id="KW-0349">Heme</keyword>
<keyword id="KW-0408">Iron</keyword>
<keyword id="KW-0479">Metal-binding</keyword>
<keyword id="KW-0514">Muscle protein</keyword>
<keyword id="KW-0560">Oxidoreductase</keyword>
<keyword id="KW-0561">Oxygen transport</keyword>
<keyword id="KW-0813">Transport</keyword>
<feature type="initiator methionine" description="Removed" evidence="6">
    <location>
        <position position="1"/>
    </location>
</feature>
<feature type="chain" id="PRO_0000053381" description="Myoglobin">
    <location>
        <begin position="2"/>
        <end position="154"/>
    </location>
</feature>
<feature type="domain" description="Globin" evidence="5">
    <location>
        <begin position="2"/>
        <end position="148"/>
    </location>
</feature>
<feature type="binding site" evidence="4">
    <location>
        <position position="65"/>
    </location>
    <ligand>
        <name>nitrite</name>
        <dbReference type="ChEBI" id="CHEBI:16301"/>
    </ligand>
</feature>
<feature type="binding site" evidence="3 5">
    <location>
        <position position="65"/>
    </location>
    <ligand>
        <name>O2</name>
        <dbReference type="ChEBI" id="CHEBI:15379"/>
    </ligand>
</feature>
<feature type="binding site" description="proximal binding residue" evidence="1">
    <location>
        <position position="94"/>
    </location>
    <ligand>
        <name>heme b</name>
        <dbReference type="ChEBI" id="CHEBI:60344"/>
    </ligand>
    <ligandPart>
        <name>Fe</name>
        <dbReference type="ChEBI" id="CHEBI:18248"/>
    </ligandPart>
</feature>
<reference key="1">
    <citation type="journal article" date="1983" name="Biochim. Biophys. Acta">
        <title>The primary structure of myoglobin from pacific green sea turtle (Chelonia mydas caranigra).</title>
        <authorList>
            <person name="Watts D.A."/>
            <person name="Angelides T."/>
            <person name="Brown W.D."/>
        </authorList>
    </citation>
    <scope>PROTEIN SEQUENCE OF 2-154</scope>
    <source>
        <tissue>Skeletal muscle</tissue>
    </source>
</reference>